<evidence type="ECO:0000255" key="1">
    <source>
        <dbReference type="PROSITE-ProRule" id="PRU00159"/>
    </source>
</evidence>
<evidence type="ECO:0000255" key="2">
    <source>
        <dbReference type="PROSITE-ProRule" id="PRU10027"/>
    </source>
</evidence>
<evidence type="ECO:0000269" key="3">
    <source>
    </source>
</evidence>
<evidence type="ECO:0000269" key="4">
    <source>
    </source>
</evidence>
<evidence type="ECO:0000269" key="5">
    <source>
    </source>
</evidence>
<evidence type="ECO:0000305" key="6"/>
<evidence type="ECO:0007829" key="7">
    <source>
        <dbReference type="PDB" id="1PHK"/>
    </source>
</evidence>
<evidence type="ECO:0007829" key="8">
    <source>
        <dbReference type="PDB" id="1QL6"/>
    </source>
</evidence>
<dbReference type="EC" id="2.7.11.19"/>
<dbReference type="EC" id="2.7.11.1"/>
<dbReference type="EC" id="2.7.11.26"/>
<dbReference type="EMBL" id="Y00684">
    <property type="protein sequence ID" value="CAA68682.1"/>
    <property type="molecule type" value="mRNA"/>
</dbReference>
<dbReference type="PIR" id="S00075">
    <property type="entry name" value="KIRBFG"/>
</dbReference>
<dbReference type="RefSeq" id="NP_001095175.1">
    <property type="nucleotide sequence ID" value="NM_001101705.1"/>
</dbReference>
<dbReference type="RefSeq" id="XP_008247862.1">
    <property type="nucleotide sequence ID" value="XM_008249640.4"/>
</dbReference>
<dbReference type="RefSeq" id="XP_069919831.1">
    <property type="nucleotide sequence ID" value="XM_070063730.1"/>
</dbReference>
<dbReference type="PDB" id="1PHK">
    <property type="method" value="X-ray"/>
    <property type="resolution" value="2.20 A"/>
    <property type="chains" value="A=2-299"/>
</dbReference>
<dbReference type="PDB" id="1QL6">
    <property type="method" value="X-ray"/>
    <property type="resolution" value="2.40 A"/>
    <property type="chains" value="A=2-299"/>
</dbReference>
<dbReference type="PDB" id="2PHK">
    <property type="method" value="X-ray"/>
    <property type="resolution" value="2.60 A"/>
    <property type="chains" value="A=15-291"/>
</dbReference>
<dbReference type="PDBsum" id="1PHK"/>
<dbReference type="PDBsum" id="1QL6"/>
<dbReference type="PDBsum" id="2PHK"/>
<dbReference type="SMR" id="P00518"/>
<dbReference type="DIP" id="DIP-48334N"/>
<dbReference type="FunCoup" id="P00518">
    <property type="interactions" value="238"/>
</dbReference>
<dbReference type="IntAct" id="P00518">
    <property type="interactions" value="2"/>
</dbReference>
<dbReference type="STRING" id="9986.ENSOCUP00000011717"/>
<dbReference type="iPTMnet" id="P00518"/>
<dbReference type="PaxDb" id="9986-ENSOCUP00000011717"/>
<dbReference type="Ensembl" id="ENSOCUT00000013615.4">
    <property type="protein sequence ID" value="ENSOCUP00000011717.3"/>
    <property type="gene ID" value="ENSOCUG00000013618.4"/>
</dbReference>
<dbReference type="GeneID" id="100009297"/>
<dbReference type="KEGG" id="ocu:100009297"/>
<dbReference type="CTD" id="5260"/>
<dbReference type="eggNOG" id="KOG0599">
    <property type="taxonomic scope" value="Eukaryota"/>
</dbReference>
<dbReference type="GeneTree" id="ENSGT00940000158139"/>
<dbReference type="HOGENOM" id="CLU_000288_63_0_1"/>
<dbReference type="InParanoid" id="P00518"/>
<dbReference type="OMA" id="CHYRRAK"/>
<dbReference type="OrthoDB" id="419455at2759"/>
<dbReference type="BRENDA" id="2.7.11.19">
    <property type="organism ID" value="1749"/>
</dbReference>
<dbReference type="EvolutionaryTrace" id="P00518"/>
<dbReference type="Proteomes" id="UP000001811">
    <property type="component" value="Unplaced"/>
</dbReference>
<dbReference type="Bgee" id="ENSOCUG00000013618">
    <property type="expression patterns" value="Expressed in skeletal muscle tissue and 10 other cell types or tissues"/>
</dbReference>
<dbReference type="GO" id="GO:0005964">
    <property type="term" value="C:phosphorylase kinase complex"/>
    <property type="evidence" value="ECO:0000314"/>
    <property type="project" value="FlyBase"/>
</dbReference>
<dbReference type="GO" id="GO:0098723">
    <property type="term" value="C:skeletal muscle myofibril"/>
    <property type="evidence" value="ECO:0000314"/>
    <property type="project" value="CAFA"/>
</dbReference>
<dbReference type="GO" id="GO:0005524">
    <property type="term" value="F:ATP binding"/>
    <property type="evidence" value="ECO:0007669"/>
    <property type="project" value="UniProtKB-KW"/>
</dbReference>
<dbReference type="GO" id="GO:0005516">
    <property type="term" value="F:calmodulin binding"/>
    <property type="evidence" value="ECO:0007669"/>
    <property type="project" value="UniProtKB-KW"/>
</dbReference>
<dbReference type="GO" id="GO:0004689">
    <property type="term" value="F:phosphorylase kinase activity"/>
    <property type="evidence" value="ECO:0000314"/>
    <property type="project" value="FlyBase"/>
</dbReference>
<dbReference type="GO" id="GO:0106310">
    <property type="term" value="F:protein serine kinase activity"/>
    <property type="evidence" value="ECO:0007669"/>
    <property type="project" value="RHEA"/>
</dbReference>
<dbReference type="GO" id="GO:0005977">
    <property type="term" value="P:glycogen metabolic process"/>
    <property type="evidence" value="ECO:0007669"/>
    <property type="project" value="UniProtKB-KW"/>
</dbReference>
<dbReference type="CDD" id="cd14182">
    <property type="entry name" value="STKc_PhKG1"/>
    <property type="match status" value="1"/>
</dbReference>
<dbReference type="FunFam" id="3.30.200.20:FF:000138">
    <property type="entry name" value="Phosphorylase b kinase gamma catalytic chain, liver/testis"/>
    <property type="match status" value="1"/>
</dbReference>
<dbReference type="FunFam" id="1.10.510.10:FF:000149">
    <property type="entry name" value="phosphorylase b kinase gamma catalytic chain, liver/testis isoform"/>
    <property type="match status" value="1"/>
</dbReference>
<dbReference type="Gene3D" id="3.30.200.20">
    <property type="entry name" value="Phosphorylase Kinase, domain 1"/>
    <property type="match status" value="1"/>
</dbReference>
<dbReference type="Gene3D" id="1.10.510.10">
    <property type="entry name" value="Transferase(Phosphotransferase) domain 1"/>
    <property type="match status" value="1"/>
</dbReference>
<dbReference type="InterPro" id="IPR011009">
    <property type="entry name" value="Kinase-like_dom_sf"/>
</dbReference>
<dbReference type="InterPro" id="IPR002291">
    <property type="entry name" value="Phosph_kin_gamma"/>
</dbReference>
<dbReference type="InterPro" id="IPR000719">
    <property type="entry name" value="Prot_kinase_dom"/>
</dbReference>
<dbReference type="InterPro" id="IPR017441">
    <property type="entry name" value="Protein_kinase_ATP_BS"/>
</dbReference>
<dbReference type="InterPro" id="IPR008271">
    <property type="entry name" value="Ser/Thr_kinase_AS"/>
</dbReference>
<dbReference type="PANTHER" id="PTHR24347">
    <property type="entry name" value="SERINE/THREONINE-PROTEIN KINASE"/>
    <property type="match status" value="1"/>
</dbReference>
<dbReference type="Pfam" id="PF00069">
    <property type="entry name" value="Pkinase"/>
    <property type="match status" value="1"/>
</dbReference>
<dbReference type="PRINTS" id="PR01049">
    <property type="entry name" value="PHOSPHBKNASE"/>
</dbReference>
<dbReference type="SMART" id="SM00220">
    <property type="entry name" value="S_TKc"/>
    <property type="match status" value="1"/>
</dbReference>
<dbReference type="SUPFAM" id="SSF56112">
    <property type="entry name" value="Protein kinase-like (PK-like)"/>
    <property type="match status" value="1"/>
</dbReference>
<dbReference type="PROSITE" id="PS00107">
    <property type="entry name" value="PROTEIN_KINASE_ATP"/>
    <property type="match status" value="1"/>
</dbReference>
<dbReference type="PROSITE" id="PS50011">
    <property type="entry name" value="PROTEIN_KINASE_DOM"/>
    <property type="match status" value="1"/>
</dbReference>
<dbReference type="PROSITE" id="PS00108">
    <property type="entry name" value="PROTEIN_KINASE_ST"/>
    <property type="match status" value="1"/>
</dbReference>
<comment type="function">
    <text evidence="4 5">Catalytic subunit of the phosphorylase b kinase (PHK), which mediates the neural and hormonal regulation of glycogen breakdown (glycogenolysis) by phosphorylating and thereby activating glycogen phosphorylase. In vitro, phosphorylates PYGM, TNNI3, MAPT/TAU, GAP43 and NRGN/RC3.</text>
</comment>
<comment type="catalytic activity">
    <reaction>
        <text>2 ATP + phosphorylase b = 2 ADP + phosphorylase a.</text>
        <dbReference type="EC" id="2.7.11.19"/>
    </reaction>
</comment>
<comment type="catalytic activity">
    <reaction>
        <text>L-seryl-[tau protein] + ATP = O-phospho-L-seryl-[tau protein] + ADP + H(+)</text>
        <dbReference type="Rhea" id="RHEA:12801"/>
        <dbReference type="Rhea" id="RHEA-COMP:13701"/>
        <dbReference type="Rhea" id="RHEA-COMP:13702"/>
        <dbReference type="ChEBI" id="CHEBI:15378"/>
        <dbReference type="ChEBI" id="CHEBI:29999"/>
        <dbReference type="ChEBI" id="CHEBI:30616"/>
        <dbReference type="ChEBI" id="CHEBI:83421"/>
        <dbReference type="ChEBI" id="CHEBI:456216"/>
        <dbReference type="EC" id="2.7.11.26"/>
    </reaction>
</comment>
<comment type="catalytic activity">
    <reaction>
        <text>L-threonyl-[tau protein] + ATP = O-phospho-L-threonyl-[tau protein] + ADP + H(+)</text>
        <dbReference type="Rhea" id="RHEA:53904"/>
        <dbReference type="Rhea" id="RHEA-COMP:13703"/>
        <dbReference type="Rhea" id="RHEA-COMP:13704"/>
        <dbReference type="ChEBI" id="CHEBI:15378"/>
        <dbReference type="ChEBI" id="CHEBI:30013"/>
        <dbReference type="ChEBI" id="CHEBI:30616"/>
        <dbReference type="ChEBI" id="CHEBI:61977"/>
        <dbReference type="ChEBI" id="CHEBI:456216"/>
        <dbReference type="EC" id="2.7.11.26"/>
    </reaction>
</comment>
<comment type="catalytic activity">
    <reaction>
        <text>L-seryl-[protein] + ATP = O-phospho-L-seryl-[protein] + ADP + H(+)</text>
        <dbReference type="Rhea" id="RHEA:17989"/>
        <dbReference type="Rhea" id="RHEA-COMP:9863"/>
        <dbReference type="Rhea" id="RHEA-COMP:11604"/>
        <dbReference type="ChEBI" id="CHEBI:15378"/>
        <dbReference type="ChEBI" id="CHEBI:29999"/>
        <dbReference type="ChEBI" id="CHEBI:30616"/>
        <dbReference type="ChEBI" id="CHEBI:83421"/>
        <dbReference type="ChEBI" id="CHEBI:456216"/>
        <dbReference type="EC" id="2.7.11.1"/>
    </reaction>
</comment>
<comment type="catalytic activity">
    <reaction>
        <text>L-threonyl-[protein] + ATP = O-phospho-L-threonyl-[protein] + ADP + H(+)</text>
        <dbReference type="Rhea" id="RHEA:46608"/>
        <dbReference type="Rhea" id="RHEA-COMP:11060"/>
        <dbReference type="Rhea" id="RHEA-COMP:11605"/>
        <dbReference type="ChEBI" id="CHEBI:15378"/>
        <dbReference type="ChEBI" id="CHEBI:30013"/>
        <dbReference type="ChEBI" id="CHEBI:30616"/>
        <dbReference type="ChEBI" id="CHEBI:61977"/>
        <dbReference type="ChEBI" id="CHEBI:456216"/>
        <dbReference type="EC" id="2.7.11.1"/>
    </reaction>
</comment>
<comment type="subunit">
    <text>Hexadecamer of 4 heterotetramers, each composed of alpha, beta, gamma, and delta subunits. Alpha (PHKA1 or PHKA2) and beta (PHKB) are regulatory subunits, gamma (PHKG1 or PHKG2) is the catalytic subunit, and delta is calmodulin.</text>
</comment>
<comment type="domain">
    <text>The two calmodulin-binding domains appear to act in concert to bind a single molecule of calmodulin and are pseudosubstrate/autoinhibitory domains.</text>
</comment>
<comment type="similarity">
    <text evidence="6">Belongs to the protein kinase superfamily. CAMK Ser/Thr protein kinase family.</text>
</comment>
<feature type="initiator methionine" description="Removed" evidence="3">
    <location>
        <position position="1"/>
    </location>
</feature>
<feature type="chain" id="PRO_0000086510" description="Phosphorylase b kinase gamma catalytic chain, skeletal muscle/heart isoform">
    <location>
        <begin position="2"/>
        <end position="387"/>
    </location>
</feature>
<feature type="domain" description="Protein kinase" evidence="1">
    <location>
        <begin position="20"/>
        <end position="288"/>
    </location>
</feature>
<feature type="region of interest" description="Calmodulin-binding (domain-N)">
    <location>
        <begin position="303"/>
        <end position="327"/>
    </location>
</feature>
<feature type="region of interest" description="Calmodulin-binding (domain-C)">
    <location>
        <begin position="343"/>
        <end position="367"/>
    </location>
</feature>
<feature type="active site" description="Proton acceptor" evidence="1 2">
    <location>
        <position position="150"/>
    </location>
</feature>
<feature type="binding site" evidence="1">
    <location>
        <begin position="26"/>
        <end position="34"/>
    </location>
    <ligand>
        <name>ATP</name>
        <dbReference type="ChEBI" id="CHEBI:30616"/>
    </ligand>
</feature>
<feature type="binding site" evidence="1">
    <location>
        <position position="49"/>
    </location>
    <ligand>
        <name>ATP</name>
        <dbReference type="ChEBI" id="CHEBI:30616"/>
    </ligand>
</feature>
<feature type="turn" evidence="7">
    <location>
        <begin position="17"/>
        <end position="19"/>
    </location>
</feature>
<feature type="strand" evidence="7">
    <location>
        <begin position="20"/>
        <end position="28"/>
    </location>
</feature>
<feature type="strand" evidence="7">
    <location>
        <begin position="30"/>
        <end position="39"/>
    </location>
</feature>
<feature type="turn" evidence="7">
    <location>
        <begin position="40"/>
        <end position="43"/>
    </location>
</feature>
<feature type="strand" evidence="7">
    <location>
        <begin position="44"/>
        <end position="52"/>
    </location>
</feature>
<feature type="turn" evidence="8">
    <location>
        <begin position="55"/>
        <end position="58"/>
    </location>
</feature>
<feature type="helix" evidence="7">
    <location>
        <begin position="61"/>
        <end position="81"/>
    </location>
</feature>
<feature type="strand" evidence="7">
    <location>
        <begin position="90"/>
        <end position="95"/>
    </location>
</feature>
<feature type="strand" evidence="7">
    <location>
        <begin position="97"/>
        <end position="105"/>
    </location>
</feature>
<feature type="helix" evidence="7">
    <location>
        <begin position="112"/>
        <end position="119"/>
    </location>
</feature>
<feature type="helix" evidence="7">
    <location>
        <begin position="124"/>
        <end position="143"/>
    </location>
</feature>
<feature type="helix" evidence="7">
    <location>
        <begin position="153"/>
        <end position="155"/>
    </location>
</feature>
<feature type="strand" evidence="7">
    <location>
        <begin position="156"/>
        <end position="158"/>
    </location>
</feature>
<feature type="strand" evidence="7">
    <location>
        <begin position="164"/>
        <end position="166"/>
    </location>
</feature>
<feature type="helix" evidence="7">
    <location>
        <begin position="188"/>
        <end position="190"/>
    </location>
</feature>
<feature type="helix" evidence="7">
    <location>
        <begin position="193"/>
        <end position="200"/>
    </location>
</feature>
<feature type="helix" evidence="7">
    <location>
        <begin position="210"/>
        <end position="225"/>
    </location>
</feature>
<feature type="helix" evidence="7">
    <location>
        <begin position="235"/>
        <end position="244"/>
    </location>
</feature>
<feature type="turn" evidence="7">
    <location>
        <begin position="251"/>
        <end position="253"/>
    </location>
</feature>
<feature type="helix" evidence="7">
    <location>
        <begin position="254"/>
        <end position="256"/>
    </location>
</feature>
<feature type="helix" evidence="7">
    <location>
        <begin position="259"/>
        <end position="268"/>
    </location>
</feature>
<feature type="helix" evidence="7">
    <location>
        <begin position="273"/>
        <end position="275"/>
    </location>
</feature>
<feature type="helix" evidence="7">
    <location>
        <begin position="279"/>
        <end position="282"/>
    </location>
</feature>
<feature type="helix" evidence="7">
    <location>
        <begin position="286"/>
        <end position="288"/>
    </location>
</feature>
<sequence length="387" mass="44803">MTRDAALPGSHSTHGFYENYEPKEILGRGVSSVVRRCIHKPTCKEYAVKIIDVTGGGSFSAEEVQELREATLKEVDILRKVSGHPNIIQLKDTYETNTFFFLVFDLMKKGELFDYLTEKVTLSEKETRKIMRALLEVICALHKLNIVHRDLKPENILLDDDMNIKLTDFGFSCQLDPGEKLREVCGTPSYLAPEIIECSMNDNHPGYGKEVDMWSTGVIMYTLLAGSPPFWHRKQMLMLRMIMSGNYQFGSPEWDDYSDTVKDLVSRFLVVQPQKRYTAEEALAHPFFQQYVVEEVRHFSPRGKFKVICLTVLASVRIYYQYRRVKPVTREIVIRDPYALRPLRRLIDAYAFRIYGHWVKKGQQQNRAALFENTPKAVLFSLAEDDY</sequence>
<proteinExistence type="evidence at protein level"/>
<keyword id="KW-0002">3D-structure</keyword>
<keyword id="KW-0067">ATP-binding</keyword>
<keyword id="KW-0112">Calmodulin-binding</keyword>
<keyword id="KW-0119">Carbohydrate metabolism</keyword>
<keyword id="KW-0903">Direct protein sequencing</keyword>
<keyword id="KW-0321">Glycogen metabolism</keyword>
<keyword id="KW-0418">Kinase</keyword>
<keyword id="KW-0514">Muscle protein</keyword>
<keyword id="KW-0547">Nucleotide-binding</keyword>
<keyword id="KW-1185">Reference proteome</keyword>
<keyword id="KW-0723">Serine/threonine-protein kinase</keyword>
<keyword id="KW-0808">Transferase</keyword>
<accession>P00518</accession>
<name>PHKG1_RABIT</name>
<gene>
    <name type="primary">PHKG1</name>
    <name type="synonym">PHKG</name>
</gene>
<organism>
    <name type="scientific">Oryctolagus cuniculus</name>
    <name type="common">Rabbit</name>
    <dbReference type="NCBI Taxonomy" id="9986"/>
    <lineage>
        <taxon>Eukaryota</taxon>
        <taxon>Metazoa</taxon>
        <taxon>Chordata</taxon>
        <taxon>Craniata</taxon>
        <taxon>Vertebrata</taxon>
        <taxon>Euteleostomi</taxon>
        <taxon>Mammalia</taxon>
        <taxon>Eutheria</taxon>
        <taxon>Euarchontoglires</taxon>
        <taxon>Glires</taxon>
        <taxon>Lagomorpha</taxon>
        <taxon>Leporidae</taxon>
        <taxon>Oryctolagus</taxon>
    </lineage>
</organism>
<protein>
    <recommendedName>
        <fullName>Phosphorylase b kinase gamma catalytic chain, skeletal muscle/heart isoform</fullName>
        <ecNumber>2.7.11.19</ecNumber>
    </recommendedName>
    <alternativeName>
        <fullName>Phosphorylase kinase subunit gamma-1</fullName>
    </alternativeName>
    <alternativeName>
        <fullName>Serine/threonine-protein kinase PHKG1</fullName>
        <ecNumber>2.7.11.1</ecNumber>
        <ecNumber>2.7.11.26</ecNumber>
    </alternativeName>
</protein>
<reference key="1">
    <citation type="journal article" date="1987" name="FEBS Lett.">
        <title>Isolation and sequence analysis of a cDNA clone encoding the entire catalytic subunit of phosphorylase kinase.</title>
        <authorList>
            <person name="da Cruz e Silva E.F."/>
            <person name="Cohen P.T.W."/>
        </authorList>
    </citation>
    <scope>NUCLEOTIDE SEQUENCE [MRNA]</scope>
    <source>
        <strain>New Zealand white</strain>
    </source>
</reference>
<reference key="2">
    <citation type="journal article" date="1984" name="Biochemistry">
        <title>Homology of the gamma subunit of phosphorylase b kinase with cAMP-dependent protein kinase.</title>
        <authorList>
            <person name="Reimann E.M."/>
            <person name="Titani K."/>
            <person name="Ericsson L.H."/>
            <person name="Wade R.D."/>
            <person name="Fischer E.H."/>
            <person name="Walsh K.A."/>
        </authorList>
    </citation>
    <scope>PROTEIN SEQUENCE OF 2-387</scope>
</reference>
<reference key="3">
    <citation type="journal article" date="1989" name="J. Biol. Chem.">
        <title>The gamma-subunit of skeletal muscle phosphorylase kinase contains two noncontiguous domains that act in concert to bind calmodulin.</title>
        <authorList>
            <person name="Dasgupta M."/>
            <person name="Honeycutt T."/>
            <person name="Blumenthal D.K."/>
        </authorList>
    </citation>
    <scope>CALMODULIN-BINDING DOMAINS</scope>
</reference>
<reference key="4">
    <citation type="journal article" date="1993" name="J. Biol. Chem.">
        <title>Phosphorylase kinase phosphorylates the calmodulin-binding regulatory regions of neuronal tissue-specific proteins B-50 (GAP-43) and neurogranin.</title>
        <authorList>
            <person name="Paudel H.K."/>
            <person name="Zwiers H."/>
            <person name="Wang J.H."/>
        </authorList>
    </citation>
    <scope>FUNCTION IN PHOSPHORYLATION OF GAP43 AND NRGN/RC3</scope>
</reference>
<reference key="5">
    <citation type="journal article" date="1995" name="J. Biol. Chem.">
        <title>Characterization of the regulatory domain of the gamma-subunit of phosphorylase kinase. The two noncontiguous calmodulin-binding subdomains are also autoinhibitory.</title>
        <authorList>
            <person name="Dasgupta M."/>
            <person name="Blumenthal D.K."/>
        </authorList>
    </citation>
    <scope>CALMODULIN-BINDING DOMAINS</scope>
</reference>
<reference key="6">
    <citation type="journal article" date="1995" name="Structure">
        <title>Two structures of the catalytic domain of phosphorylase kinase: an active protein kinase complexed with substrate analogue and product.</title>
        <authorList>
            <person name="Owen D.J."/>
            <person name="Noble M.E.M."/>
            <person name="Garman E.F."/>
            <person name="Papageorgiou A.C."/>
            <person name="Johnson L.N."/>
        </authorList>
    </citation>
    <scope>X-RAY CRYSTALLOGRAPHY (2.2 ANGSTROMS) OF 16-292</scope>
</reference>
<reference key="7">
    <citation type="journal article" date="1997" name="J. Biol. Chem.">
        <title>The regulatory Ser262 of microtubule-associated protein tau is phosphorylated by phosphorylase kinase.</title>
        <authorList>
            <person name="Paudel H.K."/>
        </authorList>
    </citation>
    <scope>FUNCTION IN PHOSPHORYLATION OF MAPT</scope>
</reference>
<reference key="8">
    <citation type="journal article" date="1997" name="EMBO J.">
        <title>The crystal structure of a phosphorylase kinase peptide substrate complex: kinase substrate recognition.</title>
        <authorList>
            <person name="Lowe E.D."/>
            <person name="Noble M.E.M."/>
            <person name="Skamnaki V.T."/>
            <person name="Oikonomakos N.G."/>
            <person name="Owen D.J."/>
            <person name="Johnson L.N."/>
        </authorList>
    </citation>
    <scope>X-RAY CRYSTALLOGRAPHY (2.6 ANGSTROMS) OF 1-299</scope>
</reference>